<organism>
    <name type="scientific">Thermosipho melanesiensis (strain DSM 12029 / CIP 104789 / BI429)</name>
    <dbReference type="NCBI Taxonomy" id="391009"/>
    <lineage>
        <taxon>Bacteria</taxon>
        <taxon>Thermotogati</taxon>
        <taxon>Thermotogota</taxon>
        <taxon>Thermotogae</taxon>
        <taxon>Thermotogales</taxon>
        <taxon>Fervidobacteriaceae</taxon>
        <taxon>Thermosipho</taxon>
    </lineage>
</organism>
<keyword id="KW-0012">Acyltransferase</keyword>
<keyword id="KW-0133">Cell shape</keyword>
<keyword id="KW-0961">Cell wall biogenesis/degradation</keyword>
<keyword id="KW-0963">Cytoplasm</keyword>
<keyword id="KW-0460">Magnesium</keyword>
<keyword id="KW-0479">Metal-binding</keyword>
<keyword id="KW-0511">Multifunctional enzyme</keyword>
<keyword id="KW-0548">Nucleotidyltransferase</keyword>
<keyword id="KW-0573">Peptidoglycan synthesis</keyword>
<keyword id="KW-0677">Repeat</keyword>
<keyword id="KW-0808">Transferase</keyword>
<evidence type="ECO:0000255" key="1">
    <source>
        <dbReference type="HAMAP-Rule" id="MF_01631"/>
    </source>
</evidence>
<accession>A6LJD6</accession>
<proteinExistence type="inferred from homology"/>
<feature type="chain" id="PRO_1000056210" description="Bifunctional protein GlmU">
    <location>
        <begin position="1"/>
        <end position="450"/>
    </location>
</feature>
<feature type="region of interest" description="Pyrophosphorylase" evidence="1">
    <location>
        <begin position="1"/>
        <end position="217"/>
    </location>
</feature>
<feature type="region of interest" description="Linker" evidence="1">
    <location>
        <begin position="218"/>
        <end position="238"/>
    </location>
</feature>
<feature type="region of interest" description="N-acetyltransferase" evidence="1">
    <location>
        <begin position="239"/>
        <end position="450"/>
    </location>
</feature>
<feature type="active site" description="Proton acceptor" evidence="1">
    <location>
        <position position="350"/>
    </location>
</feature>
<feature type="binding site" evidence="1">
    <location>
        <begin position="6"/>
        <end position="9"/>
    </location>
    <ligand>
        <name>UDP-N-acetyl-alpha-D-glucosamine</name>
        <dbReference type="ChEBI" id="CHEBI:57705"/>
    </ligand>
</feature>
<feature type="binding site" evidence="1">
    <location>
        <position position="20"/>
    </location>
    <ligand>
        <name>UDP-N-acetyl-alpha-D-glucosamine</name>
        <dbReference type="ChEBI" id="CHEBI:57705"/>
    </ligand>
</feature>
<feature type="binding site" evidence="1">
    <location>
        <position position="68"/>
    </location>
    <ligand>
        <name>UDP-N-acetyl-alpha-D-glucosamine</name>
        <dbReference type="ChEBI" id="CHEBI:57705"/>
    </ligand>
</feature>
<feature type="binding site" evidence="1">
    <location>
        <begin position="73"/>
        <end position="74"/>
    </location>
    <ligand>
        <name>UDP-N-acetyl-alpha-D-glucosamine</name>
        <dbReference type="ChEBI" id="CHEBI:57705"/>
    </ligand>
</feature>
<feature type="binding site" evidence="1">
    <location>
        <begin position="95"/>
        <end position="97"/>
    </location>
    <ligand>
        <name>UDP-N-acetyl-alpha-D-glucosamine</name>
        <dbReference type="ChEBI" id="CHEBI:57705"/>
    </ligand>
</feature>
<feature type="binding site" evidence="1">
    <location>
        <position position="97"/>
    </location>
    <ligand>
        <name>Mg(2+)</name>
        <dbReference type="ChEBI" id="CHEBI:18420"/>
    </ligand>
</feature>
<feature type="binding site" evidence="1">
    <location>
        <position position="134"/>
    </location>
    <ligand>
        <name>UDP-N-acetyl-alpha-D-glucosamine</name>
        <dbReference type="ChEBI" id="CHEBI:57705"/>
    </ligand>
</feature>
<feature type="binding site" evidence="1">
    <location>
        <position position="146"/>
    </location>
    <ligand>
        <name>UDP-N-acetyl-alpha-D-glucosamine</name>
        <dbReference type="ChEBI" id="CHEBI:57705"/>
    </ligand>
</feature>
<feature type="binding site" evidence="1">
    <location>
        <position position="161"/>
    </location>
    <ligand>
        <name>UDP-N-acetyl-alpha-D-glucosamine</name>
        <dbReference type="ChEBI" id="CHEBI:57705"/>
    </ligand>
</feature>
<feature type="binding site" evidence="1">
    <location>
        <position position="215"/>
    </location>
    <ligand>
        <name>Mg(2+)</name>
        <dbReference type="ChEBI" id="CHEBI:18420"/>
    </ligand>
</feature>
<feature type="binding site" evidence="1">
    <location>
        <position position="215"/>
    </location>
    <ligand>
        <name>UDP-N-acetyl-alpha-D-glucosamine</name>
        <dbReference type="ChEBI" id="CHEBI:57705"/>
    </ligand>
</feature>
<feature type="binding site" evidence="1">
    <location>
        <position position="320"/>
    </location>
    <ligand>
        <name>UDP-N-acetyl-alpha-D-glucosamine</name>
        <dbReference type="ChEBI" id="CHEBI:57705"/>
    </ligand>
</feature>
<feature type="binding site" evidence="1">
    <location>
        <position position="338"/>
    </location>
    <ligand>
        <name>UDP-N-acetyl-alpha-D-glucosamine</name>
        <dbReference type="ChEBI" id="CHEBI:57705"/>
    </ligand>
</feature>
<feature type="binding site" evidence="1">
    <location>
        <position position="353"/>
    </location>
    <ligand>
        <name>UDP-N-acetyl-alpha-D-glucosamine</name>
        <dbReference type="ChEBI" id="CHEBI:57705"/>
    </ligand>
</feature>
<feature type="binding site" evidence="1">
    <location>
        <position position="364"/>
    </location>
    <ligand>
        <name>UDP-N-acetyl-alpha-D-glucosamine</name>
        <dbReference type="ChEBI" id="CHEBI:57705"/>
    </ligand>
</feature>
<feature type="binding site" evidence="1">
    <location>
        <position position="367"/>
    </location>
    <ligand>
        <name>acetyl-CoA</name>
        <dbReference type="ChEBI" id="CHEBI:57288"/>
    </ligand>
</feature>
<feature type="binding site" evidence="1">
    <location>
        <begin position="373"/>
        <end position="374"/>
    </location>
    <ligand>
        <name>acetyl-CoA</name>
        <dbReference type="ChEBI" id="CHEBI:57288"/>
    </ligand>
</feature>
<feature type="binding site" evidence="1">
    <location>
        <position position="392"/>
    </location>
    <ligand>
        <name>acetyl-CoA</name>
        <dbReference type="ChEBI" id="CHEBI:57288"/>
    </ligand>
</feature>
<feature type="binding site" evidence="1">
    <location>
        <position position="410"/>
    </location>
    <ligand>
        <name>acetyl-CoA</name>
        <dbReference type="ChEBI" id="CHEBI:57288"/>
    </ligand>
</feature>
<feature type="binding site" evidence="1">
    <location>
        <position position="427"/>
    </location>
    <ligand>
        <name>acetyl-CoA</name>
        <dbReference type="ChEBI" id="CHEBI:57288"/>
    </ligand>
</feature>
<dbReference type="EC" id="2.7.7.23" evidence="1"/>
<dbReference type="EC" id="2.3.1.157" evidence="1"/>
<dbReference type="EMBL" id="CP000716">
    <property type="protein sequence ID" value="ABR30037.1"/>
    <property type="molecule type" value="Genomic_DNA"/>
</dbReference>
<dbReference type="RefSeq" id="WP_012056398.1">
    <property type="nucleotide sequence ID" value="NC_009616.1"/>
</dbReference>
<dbReference type="SMR" id="A6LJD6"/>
<dbReference type="STRING" id="391009.Tmel_0160"/>
<dbReference type="KEGG" id="tme:Tmel_0160"/>
<dbReference type="eggNOG" id="COG1207">
    <property type="taxonomic scope" value="Bacteria"/>
</dbReference>
<dbReference type="HOGENOM" id="CLU_029499_15_2_0"/>
<dbReference type="OrthoDB" id="9775031at2"/>
<dbReference type="UniPathway" id="UPA00113">
    <property type="reaction ID" value="UER00532"/>
</dbReference>
<dbReference type="UniPathway" id="UPA00113">
    <property type="reaction ID" value="UER00533"/>
</dbReference>
<dbReference type="UniPathway" id="UPA00973"/>
<dbReference type="Proteomes" id="UP000001110">
    <property type="component" value="Chromosome"/>
</dbReference>
<dbReference type="GO" id="GO:0005737">
    <property type="term" value="C:cytoplasm"/>
    <property type="evidence" value="ECO:0007669"/>
    <property type="project" value="UniProtKB-SubCell"/>
</dbReference>
<dbReference type="GO" id="GO:0016020">
    <property type="term" value="C:membrane"/>
    <property type="evidence" value="ECO:0007669"/>
    <property type="project" value="GOC"/>
</dbReference>
<dbReference type="GO" id="GO:0019134">
    <property type="term" value="F:glucosamine-1-phosphate N-acetyltransferase activity"/>
    <property type="evidence" value="ECO:0007669"/>
    <property type="project" value="UniProtKB-UniRule"/>
</dbReference>
<dbReference type="GO" id="GO:0000287">
    <property type="term" value="F:magnesium ion binding"/>
    <property type="evidence" value="ECO:0007669"/>
    <property type="project" value="UniProtKB-UniRule"/>
</dbReference>
<dbReference type="GO" id="GO:0003977">
    <property type="term" value="F:UDP-N-acetylglucosamine diphosphorylase activity"/>
    <property type="evidence" value="ECO:0007669"/>
    <property type="project" value="UniProtKB-UniRule"/>
</dbReference>
<dbReference type="GO" id="GO:0000902">
    <property type="term" value="P:cell morphogenesis"/>
    <property type="evidence" value="ECO:0007669"/>
    <property type="project" value="UniProtKB-UniRule"/>
</dbReference>
<dbReference type="GO" id="GO:0071555">
    <property type="term" value="P:cell wall organization"/>
    <property type="evidence" value="ECO:0007669"/>
    <property type="project" value="UniProtKB-KW"/>
</dbReference>
<dbReference type="GO" id="GO:0009245">
    <property type="term" value="P:lipid A biosynthetic process"/>
    <property type="evidence" value="ECO:0007669"/>
    <property type="project" value="UniProtKB-UniRule"/>
</dbReference>
<dbReference type="GO" id="GO:0009252">
    <property type="term" value="P:peptidoglycan biosynthetic process"/>
    <property type="evidence" value="ECO:0007669"/>
    <property type="project" value="UniProtKB-UniRule"/>
</dbReference>
<dbReference type="GO" id="GO:0008360">
    <property type="term" value="P:regulation of cell shape"/>
    <property type="evidence" value="ECO:0007669"/>
    <property type="project" value="UniProtKB-KW"/>
</dbReference>
<dbReference type="GO" id="GO:0006048">
    <property type="term" value="P:UDP-N-acetylglucosamine biosynthetic process"/>
    <property type="evidence" value="ECO:0007669"/>
    <property type="project" value="UniProtKB-UniPathway"/>
</dbReference>
<dbReference type="CDD" id="cd02540">
    <property type="entry name" value="GT2_GlmU_N_bac"/>
    <property type="match status" value="1"/>
</dbReference>
<dbReference type="CDD" id="cd03353">
    <property type="entry name" value="LbH_GlmU_C"/>
    <property type="match status" value="1"/>
</dbReference>
<dbReference type="Gene3D" id="2.160.10.10">
    <property type="entry name" value="Hexapeptide repeat proteins"/>
    <property type="match status" value="1"/>
</dbReference>
<dbReference type="Gene3D" id="3.90.550.10">
    <property type="entry name" value="Spore Coat Polysaccharide Biosynthesis Protein SpsA, Chain A"/>
    <property type="match status" value="1"/>
</dbReference>
<dbReference type="HAMAP" id="MF_01631">
    <property type="entry name" value="GlmU"/>
    <property type="match status" value="1"/>
</dbReference>
<dbReference type="InterPro" id="IPR005882">
    <property type="entry name" value="Bifunctional_GlmU"/>
</dbReference>
<dbReference type="InterPro" id="IPR050065">
    <property type="entry name" value="GlmU-like"/>
</dbReference>
<dbReference type="InterPro" id="IPR038009">
    <property type="entry name" value="GlmU_C_LbH"/>
</dbReference>
<dbReference type="InterPro" id="IPR001451">
    <property type="entry name" value="Hexapep"/>
</dbReference>
<dbReference type="InterPro" id="IPR025877">
    <property type="entry name" value="MobA-like_NTP_Trfase"/>
</dbReference>
<dbReference type="InterPro" id="IPR029044">
    <property type="entry name" value="Nucleotide-diphossugar_trans"/>
</dbReference>
<dbReference type="InterPro" id="IPR011004">
    <property type="entry name" value="Trimer_LpxA-like_sf"/>
</dbReference>
<dbReference type="NCBIfam" id="TIGR01173">
    <property type="entry name" value="glmU"/>
    <property type="match status" value="1"/>
</dbReference>
<dbReference type="NCBIfam" id="NF010934">
    <property type="entry name" value="PRK14354.1"/>
    <property type="match status" value="1"/>
</dbReference>
<dbReference type="NCBIfam" id="NF010937">
    <property type="entry name" value="PRK14357.1"/>
    <property type="match status" value="1"/>
</dbReference>
<dbReference type="PANTHER" id="PTHR43584:SF3">
    <property type="entry name" value="BIFUNCTIONAL PROTEIN GLMU"/>
    <property type="match status" value="1"/>
</dbReference>
<dbReference type="PANTHER" id="PTHR43584">
    <property type="entry name" value="NUCLEOTIDYL TRANSFERASE"/>
    <property type="match status" value="1"/>
</dbReference>
<dbReference type="Pfam" id="PF00132">
    <property type="entry name" value="Hexapep"/>
    <property type="match status" value="2"/>
</dbReference>
<dbReference type="Pfam" id="PF12804">
    <property type="entry name" value="NTP_transf_3"/>
    <property type="match status" value="1"/>
</dbReference>
<dbReference type="SUPFAM" id="SSF53448">
    <property type="entry name" value="Nucleotide-diphospho-sugar transferases"/>
    <property type="match status" value="1"/>
</dbReference>
<dbReference type="SUPFAM" id="SSF51161">
    <property type="entry name" value="Trimeric LpxA-like enzymes"/>
    <property type="match status" value="1"/>
</dbReference>
<name>GLMU_THEM4</name>
<protein>
    <recommendedName>
        <fullName evidence="1">Bifunctional protein GlmU</fullName>
    </recommendedName>
    <domain>
        <recommendedName>
            <fullName evidence="1">UDP-N-acetylglucosamine pyrophosphorylase</fullName>
            <ecNumber evidence="1">2.7.7.23</ecNumber>
        </recommendedName>
        <alternativeName>
            <fullName evidence="1">N-acetylglucosamine-1-phosphate uridyltransferase</fullName>
        </alternativeName>
    </domain>
    <domain>
        <recommendedName>
            <fullName evidence="1">Glucosamine-1-phosphate N-acetyltransferase</fullName>
            <ecNumber evidence="1">2.3.1.157</ecNumber>
        </recommendedName>
    </domain>
</protein>
<comment type="function">
    <text evidence="1">Catalyzes the last two sequential reactions in the de novo biosynthetic pathway for UDP-N-acetylglucosamine (UDP-GlcNAc). The C-terminal domain catalyzes the transfer of acetyl group from acetyl coenzyme A to glucosamine-1-phosphate (GlcN-1-P) to produce N-acetylglucosamine-1-phosphate (GlcNAc-1-P), which is converted into UDP-GlcNAc by the transfer of uridine 5-monophosphate (from uridine 5-triphosphate), a reaction catalyzed by the N-terminal domain.</text>
</comment>
<comment type="catalytic activity">
    <reaction evidence="1">
        <text>alpha-D-glucosamine 1-phosphate + acetyl-CoA = N-acetyl-alpha-D-glucosamine 1-phosphate + CoA + H(+)</text>
        <dbReference type="Rhea" id="RHEA:13725"/>
        <dbReference type="ChEBI" id="CHEBI:15378"/>
        <dbReference type="ChEBI" id="CHEBI:57287"/>
        <dbReference type="ChEBI" id="CHEBI:57288"/>
        <dbReference type="ChEBI" id="CHEBI:57776"/>
        <dbReference type="ChEBI" id="CHEBI:58516"/>
        <dbReference type="EC" id="2.3.1.157"/>
    </reaction>
</comment>
<comment type="catalytic activity">
    <reaction evidence="1">
        <text>N-acetyl-alpha-D-glucosamine 1-phosphate + UTP + H(+) = UDP-N-acetyl-alpha-D-glucosamine + diphosphate</text>
        <dbReference type="Rhea" id="RHEA:13509"/>
        <dbReference type="ChEBI" id="CHEBI:15378"/>
        <dbReference type="ChEBI" id="CHEBI:33019"/>
        <dbReference type="ChEBI" id="CHEBI:46398"/>
        <dbReference type="ChEBI" id="CHEBI:57705"/>
        <dbReference type="ChEBI" id="CHEBI:57776"/>
        <dbReference type="EC" id="2.7.7.23"/>
    </reaction>
</comment>
<comment type="cofactor">
    <cofactor evidence="1">
        <name>Mg(2+)</name>
        <dbReference type="ChEBI" id="CHEBI:18420"/>
    </cofactor>
    <text evidence="1">Binds 1 Mg(2+) ion per subunit.</text>
</comment>
<comment type="pathway">
    <text evidence="1">Nucleotide-sugar biosynthesis; UDP-N-acetyl-alpha-D-glucosamine biosynthesis; N-acetyl-alpha-D-glucosamine 1-phosphate from alpha-D-glucosamine 6-phosphate (route II): step 2/2.</text>
</comment>
<comment type="pathway">
    <text evidence="1">Nucleotide-sugar biosynthesis; UDP-N-acetyl-alpha-D-glucosamine biosynthesis; UDP-N-acetyl-alpha-D-glucosamine from N-acetyl-alpha-D-glucosamine 1-phosphate: step 1/1.</text>
</comment>
<comment type="pathway">
    <text evidence="1">Bacterial outer membrane biogenesis; LPS lipid A biosynthesis.</text>
</comment>
<comment type="subunit">
    <text evidence="1">Homotrimer.</text>
</comment>
<comment type="subcellular location">
    <subcellularLocation>
        <location evidence="1">Cytoplasm</location>
    </subcellularLocation>
</comment>
<comment type="similarity">
    <text evidence="1">In the N-terminal section; belongs to the N-acetylglucosamine-1-phosphate uridyltransferase family.</text>
</comment>
<comment type="similarity">
    <text evidence="1">In the C-terminal section; belongs to the transferase hexapeptide repeat family.</text>
</comment>
<gene>
    <name evidence="1" type="primary">glmU</name>
    <name type="ordered locus">Tmel_0160</name>
</gene>
<reference key="1">
    <citation type="submission" date="2007-05" db="EMBL/GenBank/DDBJ databases">
        <title>Complete sequence of Thermosipho melanesiensis BI429.</title>
        <authorList>
            <consortium name="US DOE Joint Genome Institute"/>
            <person name="Copeland A."/>
            <person name="Lucas S."/>
            <person name="Lapidus A."/>
            <person name="Barry K."/>
            <person name="Glavina del Rio T."/>
            <person name="Dalin E."/>
            <person name="Tice H."/>
            <person name="Pitluck S."/>
            <person name="Chertkov O."/>
            <person name="Brettin T."/>
            <person name="Bruce D."/>
            <person name="Detter J.C."/>
            <person name="Han C."/>
            <person name="Schmutz J."/>
            <person name="Larimer F."/>
            <person name="Land M."/>
            <person name="Hauser L."/>
            <person name="Kyrpides N."/>
            <person name="Mikhailova N."/>
            <person name="Nelson K."/>
            <person name="Gogarten J.P."/>
            <person name="Noll K."/>
            <person name="Richardson P."/>
        </authorList>
    </citation>
    <scope>NUCLEOTIDE SEQUENCE [LARGE SCALE GENOMIC DNA]</scope>
    <source>
        <strain>DSM 12029 / CIP 104789 / BI429</strain>
    </source>
</reference>
<sequence length="450" mass="50200">MKTLILAAGLGKRMNSKYPKVIHKIFNKPMINWVIETAKNFGKVAVVLGHKYELVKKVIPEDVEIYLQNQQLGTAHAVMSAIEFVSPNDNLLILYGDVPFISHETLKRLEKEHVKSNSDVTILTSILENPTGYGRIVRDGKIRIIEDKDATEEVKKIKEINTGIYIIKGNFLIENINKIENNNTQKEYYLTDILKFTDNISTVTTNDVDEITGVNNRIQLANLEKKIRRKINEKLMNQGVRIIDPNAVYIDPQVKIGRDTLIYPFTFIEGETEIGEDCVIGPLTRIKESKIGNKVTINRSEVEKSVIEDNVSVGPFARLREGTTLDENVKIGNFVETKKSSIGKNSKAQHLTYLGDATIGNNVNIGAGTITCNYDGQTKHPTYIEDNAFIGSNNSLVAPVKIGKNAITAAGSTITNNVPENSLAIARQKQINKENWVLRKGGQKNANNKK</sequence>